<gene>
    <name evidence="1" type="primary">rnhB</name>
    <name type="ordered locus">Ppro_1092</name>
</gene>
<keyword id="KW-0963">Cytoplasm</keyword>
<keyword id="KW-0255">Endonuclease</keyword>
<keyword id="KW-0378">Hydrolase</keyword>
<keyword id="KW-0464">Manganese</keyword>
<keyword id="KW-0479">Metal-binding</keyword>
<keyword id="KW-0540">Nuclease</keyword>
<keyword id="KW-1185">Reference proteome</keyword>
<feature type="chain" id="PRO_0000334933" description="Ribonuclease HII">
    <location>
        <begin position="1"/>
        <end position="219"/>
    </location>
</feature>
<feature type="domain" description="RNase H type-2" evidence="2">
    <location>
        <begin position="30"/>
        <end position="219"/>
    </location>
</feature>
<feature type="binding site" evidence="1">
    <location>
        <position position="36"/>
    </location>
    <ligand>
        <name>a divalent metal cation</name>
        <dbReference type="ChEBI" id="CHEBI:60240"/>
    </ligand>
</feature>
<feature type="binding site" evidence="1">
    <location>
        <position position="37"/>
    </location>
    <ligand>
        <name>a divalent metal cation</name>
        <dbReference type="ChEBI" id="CHEBI:60240"/>
    </ligand>
</feature>
<feature type="binding site" evidence="1">
    <location>
        <position position="128"/>
    </location>
    <ligand>
        <name>a divalent metal cation</name>
        <dbReference type="ChEBI" id="CHEBI:60240"/>
    </ligand>
</feature>
<proteinExistence type="inferred from homology"/>
<accession>A1AMZ7</accession>
<dbReference type="EC" id="3.1.26.4" evidence="1"/>
<dbReference type="EMBL" id="CP000482">
    <property type="protein sequence ID" value="ABK98717.1"/>
    <property type="molecule type" value="Genomic_DNA"/>
</dbReference>
<dbReference type="RefSeq" id="WP_011735021.1">
    <property type="nucleotide sequence ID" value="NC_008609.1"/>
</dbReference>
<dbReference type="SMR" id="A1AMZ7"/>
<dbReference type="STRING" id="338966.Ppro_1092"/>
<dbReference type="KEGG" id="ppd:Ppro_1092"/>
<dbReference type="eggNOG" id="COG0164">
    <property type="taxonomic scope" value="Bacteria"/>
</dbReference>
<dbReference type="HOGENOM" id="CLU_036532_3_2_7"/>
<dbReference type="OrthoDB" id="9803420at2"/>
<dbReference type="Proteomes" id="UP000006732">
    <property type="component" value="Chromosome"/>
</dbReference>
<dbReference type="GO" id="GO:0005737">
    <property type="term" value="C:cytoplasm"/>
    <property type="evidence" value="ECO:0007669"/>
    <property type="project" value="UniProtKB-SubCell"/>
</dbReference>
<dbReference type="GO" id="GO:0032299">
    <property type="term" value="C:ribonuclease H2 complex"/>
    <property type="evidence" value="ECO:0007669"/>
    <property type="project" value="TreeGrafter"/>
</dbReference>
<dbReference type="GO" id="GO:0030145">
    <property type="term" value="F:manganese ion binding"/>
    <property type="evidence" value="ECO:0007669"/>
    <property type="project" value="UniProtKB-UniRule"/>
</dbReference>
<dbReference type="GO" id="GO:0003723">
    <property type="term" value="F:RNA binding"/>
    <property type="evidence" value="ECO:0007669"/>
    <property type="project" value="InterPro"/>
</dbReference>
<dbReference type="GO" id="GO:0004523">
    <property type="term" value="F:RNA-DNA hybrid ribonuclease activity"/>
    <property type="evidence" value="ECO:0007669"/>
    <property type="project" value="UniProtKB-UniRule"/>
</dbReference>
<dbReference type="GO" id="GO:0043137">
    <property type="term" value="P:DNA replication, removal of RNA primer"/>
    <property type="evidence" value="ECO:0007669"/>
    <property type="project" value="TreeGrafter"/>
</dbReference>
<dbReference type="GO" id="GO:0006298">
    <property type="term" value="P:mismatch repair"/>
    <property type="evidence" value="ECO:0007669"/>
    <property type="project" value="TreeGrafter"/>
</dbReference>
<dbReference type="CDD" id="cd07182">
    <property type="entry name" value="RNase_HII_bacteria_HII_like"/>
    <property type="match status" value="1"/>
</dbReference>
<dbReference type="FunFam" id="3.30.420.10:FF:000006">
    <property type="entry name" value="Ribonuclease HII"/>
    <property type="match status" value="1"/>
</dbReference>
<dbReference type="Gene3D" id="3.30.420.10">
    <property type="entry name" value="Ribonuclease H-like superfamily/Ribonuclease H"/>
    <property type="match status" value="1"/>
</dbReference>
<dbReference type="HAMAP" id="MF_00052_B">
    <property type="entry name" value="RNase_HII_B"/>
    <property type="match status" value="1"/>
</dbReference>
<dbReference type="InterPro" id="IPR022898">
    <property type="entry name" value="RNase_HII"/>
</dbReference>
<dbReference type="InterPro" id="IPR001352">
    <property type="entry name" value="RNase_HII/HIII"/>
</dbReference>
<dbReference type="InterPro" id="IPR024567">
    <property type="entry name" value="RNase_HII/HIII_dom"/>
</dbReference>
<dbReference type="InterPro" id="IPR012337">
    <property type="entry name" value="RNaseH-like_sf"/>
</dbReference>
<dbReference type="InterPro" id="IPR036397">
    <property type="entry name" value="RNaseH_sf"/>
</dbReference>
<dbReference type="NCBIfam" id="NF000594">
    <property type="entry name" value="PRK00015.1-1"/>
    <property type="match status" value="1"/>
</dbReference>
<dbReference type="NCBIfam" id="NF000595">
    <property type="entry name" value="PRK00015.1-3"/>
    <property type="match status" value="1"/>
</dbReference>
<dbReference type="PANTHER" id="PTHR10954">
    <property type="entry name" value="RIBONUCLEASE H2 SUBUNIT A"/>
    <property type="match status" value="1"/>
</dbReference>
<dbReference type="PANTHER" id="PTHR10954:SF18">
    <property type="entry name" value="RIBONUCLEASE HII"/>
    <property type="match status" value="1"/>
</dbReference>
<dbReference type="Pfam" id="PF01351">
    <property type="entry name" value="RNase_HII"/>
    <property type="match status" value="1"/>
</dbReference>
<dbReference type="SUPFAM" id="SSF53098">
    <property type="entry name" value="Ribonuclease H-like"/>
    <property type="match status" value="1"/>
</dbReference>
<dbReference type="PROSITE" id="PS51975">
    <property type="entry name" value="RNASE_H_2"/>
    <property type="match status" value="1"/>
</dbReference>
<reference key="1">
    <citation type="submission" date="2006-10" db="EMBL/GenBank/DDBJ databases">
        <title>Complete sequence of chromosome of Pelobacter propionicus DSM 2379.</title>
        <authorList>
            <consortium name="US DOE Joint Genome Institute"/>
            <person name="Copeland A."/>
            <person name="Lucas S."/>
            <person name="Lapidus A."/>
            <person name="Barry K."/>
            <person name="Detter J.C."/>
            <person name="Glavina del Rio T."/>
            <person name="Hammon N."/>
            <person name="Israni S."/>
            <person name="Dalin E."/>
            <person name="Tice H."/>
            <person name="Pitluck S."/>
            <person name="Saunders E."/>
            <person name="Brettin T."/>
            <person name="Bruce D."/>
            <person name="Han C."/>
            <person name="Tapia R."/>
            <person name="Schmutz J."/>
            <person name="Larimer F."/>
            <person name="Land M."/>
            <person name="Hauser L."/>
            <person name="Kyrpides N."/>
            <person name="Kim E."/>
            <person name="Lovley D."/>
            <person name="Richardson P."/>
        </authorList>
    </citation>
    <scope>NUCLEOTIDE SEQUENCE [LARGE SCALE GENOMIC DNA]</scope>
    <source>
        <strain>DSM 2379 / NBRC 103807 / OttBd1</strain>
    </source>
</reference>
<comment type="function">
    <text evidence="1">Endonuclease that specifically degrades the RNA of RNA-DNA hybrids.</text>
</comment>
<comment type="catalytic activity">
    <reaction evidence="1">
        <text>Endonucleolytic cleavage to 5'-phosphomonoester.</text>
        <dbReference type="EC" id="3.1.26.4"/>
    </reaction>
</comment>
<comment type="cofactor">
    <cofactor evidence="1">
        <name>Mn(2+)</name>
        <dbReference type="ChEBI" id="CHEBI:29035"/>
    </cofactor>
    <cofactor evidence="1">
        <name>Mg(2+)</name>
        <dbReference type="ChEBI" id="CHEBI:18420"/>
    </cofactor>
    <text evidence="1">Manganese or magnesium. Binds 1 divalent metal ion per monomer in the absence of substrate. May bind a second metal ion after substrate binding.</text>
</comment>
<comment type="subcellular location">
    <subcellularLocation>
        <location evidence="1">Cytoplasm</location>
    </subcellularLocation>
</comment>
<comment type="similarity">
    <text evidence="1">Belongs to the RNase HII family.</text>
</comment>
<evidence type="ECO:0000255" key="1">
    <source>
        <dbReference type="HAMAP-Rule" id="MF_00052"/>
    </source>
</evidence>
<evidence type="ECO:0000255" key="2">
    <source>
        <dbReference type="PROSITE-ProRule" id="PRU01319"/>
    </source>
</evidence>
<organism>
    <name type="scientific">Pelobacter propionicus (strain DSM 2379 / NBRC 103807 / OttBd1)</name>
    <dbReference type="NCBI Taxonomy" id="338966"/>
    <lineage>
        <taxon>Bacteria</taxon>
        <taxon>Pseudomonadati</taxon>
        <taxon>Thermodesulfobacteriota</taxon>
        <taxon>Desulfuromonadia</taxon>
        <taxon>Desulfuromonadales</taxon>
        <taxon>Desulfuromonadaceae</taxon>
        <taxon>Pelobacter</taxon>
    </lineage>
</organism>
<sequence>MSPMQQRELFSSPPIDLLFFEQQALKQGHRVIAGIDEAGRGALCGPVVAAAVILPTGMAIPGVDDSKKLSPRTREQLFDEIMARALSVGIGIGTPQLIDRINILQATRHAMAEAVDILAPRPDMLLIDGISTIDVPLPQKTITKGDSRSLTIAAASIIAKVSRDRMLTELDLLHPGYGFASHKGYGCASHMEAIRRLGPSPVHRLTFRGVREHVTCPSS</sequence>
<name>RNH2_PELPD</name>
<protein>
    <recommendedName>
        <fullName evidence="1">Ribonuclease HII</fullName>
        <shortName evidence="1">RNase HII</shortName>
        <ecNumber evidence="1">3.1.26.4</ecNumber>
    </recommendedName>
</protein>